<proteinExistence type="evidence at protein level"/>
<name>OLEC_XANCP</name>
<feature type="chain" id="PRO_0000446917" description="Olefin beta-lactone synthetase">
    <location>
        <begin position="1"/>
        <end position="556"/>
    </location>
</feature>
<feature type="binding site" evidence="1">
    <location>
        <begin position="187"/>
        <end position="195"/>
    </location>
    <ligand>
        <name>ATP</name>
        <dbReference type="ChEBI" id="CHEBI:30616"/>
    </ligand>
</feature>
<feature type="binding site" evidence="1">
    <location>
        <begin position="321"/>
        <end position="326"/>
    </location>
    <ligand>
        <name>ATP</name>
        <dbReference type="ChEBI" id="CHEBI:30616"/>
    </ligand>
</feature>
<feature type="binding site" evidence="1">
    <location>
        <position position="430"/>
    </location>
    <ligand>
        <name>ATP</name>
        <dbReference type="ChEBI" id="CHEBI:30616"/>
    </ligand>
</feature>
<feature type="binding site" evidence="1">
    <location>
        <position position="445"/>
    </location>
    <ligand>
        <name>ATP</name>
        <dbReference type="ChEBI" id="CHEBI:30616"/>
    </ligand>
</feature>
<organism>
    <name type="scientific">Xanthomonas campestris pv. campestris (strain ATCC 33913 / DSM 3586 / NCPPB 528 / LMG 568 / P 25)</name>
    <dbReference type="NCBI Taxonomy" id="190485"/>
    <lineage>
        <taxon>Bacteria</taxon>
        <taxon>Pseudomonadati</taxon>
        <taxon>Pseudomonadota</taxon>
        <taxon>Gammaproteobacteria</taxon>
        <taxon>Lysobacterales</taxon>
        <taxon>Lysobacteraceae</taxon>
        <taxon>Xanthomonas</taxon>
    </lineage>
</organism>
<keyword id="KW-0067">ATP-binding</keyword>
<keyword id="KW-0963">Cytoplasm</keyword>
<keyword id="KW-0436">Ligase</keyword>
<keyword id="KW-0547">Nucleotide-binding</keyword>
<keyword id="KW-1185">Reference proteome</keyword>
<accession>Q8PDW6</accession>
<protein>
    <recommendedName>
        <fullName evidence="6">Olefin beta-lactone synthetase</fullName>
        <ecNumber evidence="3">6.1.3.1</ecNumber>
    </recommendedName>
</protein>
<comment type="function">
    <text evidence="2 3 4">Involved in olefin biosynthesis (PubMed:21266575, PubMed:28029240, PubMed:28223313). Catalyzes the conversion of 2-alkyl-3-hydroxyalkanoic acids to beta-lactones in the presence of ATP (PubMed:28029240).</text>
</comment>
<comment type="catalytic activity">
    <reaction evidence="3">
        <text>a (2R,3S)-2-alkyl-3-hydroxyalkanoate + ATP = a cis-3-alkyl-4-alkyloxetan-2-one + AMP + diphosphate</text>
        <dbReference type="Rhea" id="RHEA:23060"/>
        <dbReference type="ChEBI" id="CHEBI:30616"/>
        <dbReference type="ChEBI" id="CHEBI:33019"/>
        <dbReference type="ChEBI" id="CHEBI:138340"/>
        <dbReference type="ChEBI" id="CHEBI:138483"/>
        <dbReference type="ChEBI" id="CHEBI:456215"/>
        <dbReference type="EC" id="6.1.3.1"/>
    </reaction>
    <physiologicalReaction direction="left-to-right" evidence="3">
        <dbReference type="Rhea" id="RHEA:23061"/>
    </physiologicalReaction>
</comment>
<comment type="subunit">
    <text evidence="4">Monomer. Forms a complex with OleB and OleD.</text>
</comment>
<comment type="subcellular location">
    <subcellularLocation>
        <location evidence="7">Cytoplasm</location>
    </subcellularLocation>
</comment>
<comment type="similarity">
    <text evidence="6">Belongs to the ATP-dependent AMP-binding enzyme family.</text>
</comment>
<dbReference type="EC" id="6.1.3.1" evidence="3"/>
<dbReference type="EMBL" id="AE008922">
    <property type="protein sequence ID" value="AAM39537.1"/>
    <property type="molecule type" value="Genomic_DNA"/>
</dbReference>
<dbReference type="RefSeq" id="NP_635613.2">
    <property type="nucleotide sequence ID" value="NC_003902.1"/>
</dbReference>
<dbReference type="SMR" id="Q8PDW6"/>
<dbReference type="STRING" id="190485.XCC0218"/>
<dbReference type="EnsemblBacteria" id="AAM39537">
    <property type="protein sequence ID" value="AAM39537"/>
    <property type="gene ID" value="XCC0218"/>
</dbReference>
<dbReference type="KEGG" id="xcc:XCC0218"/>
<dbReference type="PATRIC" id="fig|190485.4.peg.245"/>
<dbReference type="eggNOG" id="COG0318">
    <property type="taxonomic scope" value="Bacteria"/>
</dbReference>
<dbReference type="HOGENOM" id="CLU_000022_59_12_6"/>
<dbReference type="OrthoDB" id="9803968at2"/>
<dbReference type="BioCyc" id="MetaCyc:MONOMER-20173"/>
<dbReference type="STRENDA-DB" id="FOVXJ9">
    <property type="experiment" value="Xanthomonas campestris beta-lactone synthetase (OleC) spectrophotometric assays and kinetics"/>
</dbReference>
<dbReference type="Proteomes" id="UP000001010">
    <property type="component" value="Chromosome"/>
</dbReference>
<dbReference type="GO" id="GO:0005737">
    <property type="term" value="C:cytoplasm"/>
    <property type="evidence" value="ECO:0007669"/>
    <property type="project" value="UniProtKB-SubCell"/>
</dbReference>
<dbReference type="GO" id="GO:0005524">
    <property type="term" value="F:ATP binding"/>
    <property type="evidence" value="ECO:0007669"/>
    <property type="project" value="UniProtKB-KW"/>
</dbReference>
<dbReference type="GO" id="GO:0031956">
    <property type="term" value="F:medium-chain fatty acid-CoA ligase activity"/>
    <property type="evidence" value="ECO:0000318"/>
    <property type="project" value="GO_Central"/>
</dbReference>
<dbReference type="GO" id="GO:0006631">
    <property type="term" value="P:fatty acid metabolic process"/>
    <property type="evidence" value="ECO:0000318"/>
    <property type="project" value="GO_Central"/>
</dbReference>
<dbReference type="CDD" id="cd05910">
    <property type="entry name" value="FACL_like_1"/>
    <property type="match status" value="1"/>
</dbReference>
<dbReference type="Gene3D" id="3.40.50.12780">
    <property type="entry name" value="N-terminal domain of ligase-like"/>
    <property type="match status" value="1"/>
</dbReference>
<dbReference type="InterPro" id="IPR020845">
    <property type="entry name" value="AMP-binding_CS"/>
</dbReference>
<dbReference type="InterPro" id="IPR000873">
    <property type="entry name" value="AMP-dep_synth/lig_dom"/>
</dbReference>
<dbReference type="InterPro" id="IPR042099">
    <property type="entry name" value="ANL_N_sf"/>
</dbReference>
<dbReference type="InterPro" id="IPR050237">
    <property type="entry name" value="ATP-dep_AMP-bd_enzyme"/>
</dbReference>
<dbReference type="InterPro" id="IPR054888">
    <property type="entry name" value="OlefBLtnSyn"/>
</dbReference>
<dbReference type="NCBIfam" id="NF045786">
    <property type="entry name" value="OlefBLtnSynXan"/>
    <property type="match status" value="1"/>
</dbReference>
<dbReference type="NCBIfam" id="NF006754">
    <property type="entry name" value="PRK09274.1"/>
    <property type="match status" value="1"/>
</dbReference>
<dbReference type="PANTHER" id="PTHR43767">
    <property type="entry name" value="LONG-CHAIN-FATTY-ACID--COA LIGASE"/>
    <property type="match status" value="1"/>
</dbReference>
<dbReference type="PANTHER" id="PTHR43767:SF1">
    <property type="entry name" value="NONRIBOSOMAL PEPTIDE SYNTHASE PES1 (EUROFUNG)-RELATED"/>
    <property type="match status" value="1"/>
</dbReference>
<dbReference type="Pfam" id="PF00501">
    <property type="entry name" value="AMP-binding"/>
    <property type="match status" value="1"/>
</dbReference>
<dbReference type="SUPFAM" id="SSF56801">
    <property type="entry name" value="Acetyl-CoA synthetase-like"/>
    <property type="match status" value="1"/>
</dbReference>
<dbReference type="PROSITE" id="PS00455">
    <property type="entry name" value="AMP_BINDING"/>
    <property type="match status" value="1"/>
</dbReference>
<sequence>MGDNGRMTTLCNIAASLPRLARERPDQIAIRCPGGRGANGMAAYDVTLSYAELDARSDAIAAGLALHGIGRGVRAVVMVRPSPEFFLLMFALFKAGAVPVLVDPGIDKRALKQCLDEAQPQAFIGIPLAQLARRLLRWAPSATQIVTVGGRYCWGGVTLARVERDGAGAGSQLADTAADDVAAILFTSGSTGVPKGVVYRHRHFVGQIELLRNAFDMQPGGVDLPTFPPFALFDPALGLTSVIPDMDPTRPATADPRKLHDAMTRFGVTQLFGSPALMRVLADYGQPLPNVRLATSAGAPVPPDVVAKIRALLPADAQFWTPYGATECLPVAAIEGRTLDATRTATEAGAGTCVGQVVAPNEVRIIAIDDAAIPEWSGVRVLAAGEVGEITVAGPTTTDTYFNRDAATRNAKIRERCSDGSERVVHRMGDVGYFDAEGRLWFCGRKTHRVETATGPLYTEQVEPIFNVHPQVRRTALVGVGTPGQQQPVLCVELQPGVAASAFAEVETALRAVGAAHPHTAGIARFLRHSGFPVDIRHNAKIGREKLAIWAAQQRV</sequence>
<gene>
    <name evidence="5" type="primary">oleC</name>
    <name evidence="8" type="ordered locus">XCC0218</name>
</gene>
<evidence type="ECO:0000250" key="1">
    <source>
        <dbReference type="UniProtKB" id="Q08AH3"/>
    </source>
</evidence>
<evidence type="ECO:0000269" key="2">
    <source>
    </source>
</evidence>
<evidence type="ECO:0000269" key="3">
    <source>
    </source>
</evidence>
<evidence type="ECO:0000269" key="4">
    <source>
    </source>
</evidence>
<evidence type="ECO:0000303" key="5">
    <source>
    </source>
</evidence>
<evidence type="ECO:0000305" key="6"/>
<evidence type="ECO:0000305" key="7">
    <source>
    </source>
</evidence>
<evidence type="ECO:0000312" key="8">
    <source>
        <dbReference type="EMBL" id="AAM39537.1"/>
    </source>
</evidence>
<reference key="1">
    <citation type="journal article" date="2002" name="Nature">
        <title>Comparison of the genomes of two Xanthomonas pathogens with differing host specificities.</title>
        <authorList>
            <person name="da Silva A.C.R."/>
            <person name="Ferro J.A."/>
            <person name="Reinach F.C."/>
            <person name="Farah C.S."/>
            <person name="Furlan L.R."/>
            <person name="Quaggio R.B."/>
            <person name="Monteiro-Vitorello C.B."/>
            <person name="Van Sluys M.A."/>
            <person name="Almeida N.F. Jr."/>
            <person name="Alves L.M.C."/>
            <person name="do Amaral A.M."/>
            <person name="Bertolini M.C."/>
            <person name="Camargo L.E.A."/>
            <person name="Camarotte G."/>
            <person name="Cannavan F."/>
            <person name="Cardozo J."/>
            <person name="Chambergo F."/>
            <person name="Ciapina L.P."/>
            <person name="Cicarelli R.M.B."/>
            <person name="Coutinho L.L."/>
            <person name="Cursino-Santos J.R."/>
            <person name="El-Dorry H."/>
            <person name="Faria J.B."/>
            <person name="Ferreira A.J.S."/>
            <person name="Ferreira R.C.C."/>
            <person name="Ferro M.I.T."/>
            <person name="Formighieri E.F."/>
            <person name="Franco M.C."/>
            <person name="Greggio C.C."/>
            <person name="Gruber A."/>
            <person name="Katsuyama A.M."/>
            <person name="Kishi L.T."/>
            <person name="Leite R.P."/>
            <person name="Lemos E.G.M."/>
            <person name="Lemos M.V.F."/>
            <person name="Locali E.C."/>
            <person name="Machado M.A."/>
            <person name="Madeira A.M.B.N."/>
            <person name="Martinez-Rossi N.M."/>
            <person name="Martins E.C."/>
            <person name="Meidanis J."/>
            <person name="Menck C.F.M."/>
            <person name="Miyaki C.Y."/>
            <person name="Moon D.H."/>
            <person name="Moreira L.M."/>
            <person name="Novo M.T.M."/>
            <person name="Okura V.K."/>
            <person name="Oliveira M.C."/>
            <person name="Oliveira V.R."/>
            <person name="Pereira H.A."/>
            <person name="Rossi A."/>
            <person name="Sena J.A.D."/>
            <person name="Silva C."/>
            <person name="de Souza R.F."/>
            <person name="Spinola L.A.F."/>
            <person name="Takita M.A."/>
            <person name="Tamura R.E."/>
            <person name="Teixeira E.C."/>
            <person name="Tezza R.I.D."/>
            <person name="Trindade dos Santos M."/>
            <person name="Truffi D."/>
            <person name="Tsai S.M."/>
            <person name="White F.F."/>
            <person name="Setubal J.C."/>
            <person name="Kitajima J.P."/>
        </authorList>
    </citation>
    <scope>NUCLEOTIDE SEQUENCE [LARGE SCALE GENOMIC DNA]</scope>
    <source>
        <strain>ATCC 33913 / DSM 3586 / NCPPB 528 / LMG 568 / P 25</strain>
    </source>
</reference>
<reference key="2">
    <citation type="journal article" date="2011" name="J. Biol. Chem.">
        <title>Purification and characterization of OleA from Xanthomonas campestris and demonstration of a non-decarboxylative Claisen condensation reaction.</title>
        <authorList>
            <person name="Frias J.A."/>
            <person name="Richman J.E."/>
            <person name="Erickson J.S."/>
            <person name="Wackett L.P."/>
        </authorList>
    </citation>
    <scope>FUNCTION IN OLEFIN BIOSYNTHESIS</scope>
    <source>
        <strain>ATCC 33913 / DSM 3586 / NCPPB 528 / LMG 568 / P 25</strain>
    </source>
</reference>
<reference key="3">
    <citation type="journal article" date="2017" name="Biochemistry">
        <title>beta-lactone synthetase found in the olefin biosynthesis pathway.</title>
        <authorList>
            <person name="Christenson J.K."/>
            <person name="Richman J.E."/>
            <person name="Jensen M.R."/>
            <person name="Neufeld J.Y."/>
            <person name="Wilmot C.M."/>
            <person name="Wackett L.P."/>
        </authorList>
    </citation>
    <scope>FUNCTION</scope>
    <scope>CATALYTIC ACTIVITY</scope>
</reference>
<reference key="4">
    <citation type="journal article" date="2017" name="J. Bacteriol.">
        <title>Active multienzyme assemblies for long-chain olefinic hydrocarbon biosynthesis.</title>
        <authorList>
            <person name="Christenson J.K."/>
            <person name="Jensen M.R."/>
            <person name="Goblirsch B.R."/>
            <person name="Mohamed F."/>
            <person name="Zhang W."/>
            <person name="Wilmot C.M."/>
            <person name="Wackett L.P."/>
        </authorList>
    </citation>
    <scope>FUNCTION</scope>
    <scope>SUBUNIT</scope>
    <scope>SUBCELLULAR LOCATION</scope>
    <source>
        <strain>ATCC 33913 / DSM 3586 / NCPPB 528 / LMG 568 / P 25</strain>
    </source>
</reference>